<reference key="1">
    <citation type="journal article" date="2000" name="Nature">
        <title>Sequence and analysis of chromosome 3 of the plant Arabidopsis thaliana.</title>
        <authorList>
            <person name="Salanoubat M."/>
            <person name="Lemcke K."/>
            <person name="Rieger M."/>
            <person name="Ansorge W."/>
            <person name="Unseld M."/>
            <person name="Fartmann B."/>
            <person name="Valle G."/>
            <person name="Bloecker H."/>
            <person name="Perez-Alonso M."/>
            <person name="Obermaier B."/>
            <person name="Delseny M."/>
            <person name="Boutry M."/>
            <person name="Grivell L.A."/>
            <person name="Mache R."/>
            <person name="Puigdomenech P."/>
            <person name="De Simone V."/>
            <person name="Choisne N."/>
            <person name="Artiguenave F."/>
            <person name="Robert C."/>
            <person name="Brottier P."/>
            <person name="Wincker P."/>
            <person name="Cattolico L."/>
            <person name="Weissenbach J."/>
            <person name="Saurin W."/>
            <person name="Quetier F."/>
            <person name="Schaefer M."/>
            <person name="Mueller-Auer S."/>
            <person name="Gabel C."/>
            <person name="Fuchs M."/>
            <person name="Benes V."/>
            <person name="Wurmbach E."/>
            <person name="Drzonek H."/>
            <person name="Erfle H."/>
            <person name="Jordan N."/>
            <person name="Bangert S."/>
            <person name="Wiedelmann R."/>
            <person name="Kranz H."/>
            <person name="Voss H."/>
            <person name="Holland R."/>
            <person name="Brandt P."/>
            <person name="Nyakatura G."/>
            <person name="Vezzi A."/>
            <person name="D'Angelo M."/>
            <person name="Pallavicini A."/>
            <person name="Toppo S."/>
            <person name="Simionati B."/>
            <person name="Conrad A."/>
            <person name="Hornischer K."/>
            <person name="Kauer G."/>
            <person name="Loehnert T.-H."/>
            <person name="Nordsiek G."/>
            <person name="Reichelt J."/>
            <person name="Scharfe M."/>
            <person name="Schoen O."/>
            <person name="Bargues M."/>
            <person name="Terol J."/>
            <person name="Climent J."/>
            <person name="Navarro P."/>
            <person name="Collado C."/>
            <person name="Perez-Perez A."/>
            <person name="Ottenwaelder B."/>
            <person name="Duchemin D."/>
            <person name="Cooke R."/>
            <person name="Laudie M."/>
            <person name="Berger-Llauro C."/>
            <person name="Purnelle B."/>
            <person name="Masuy D."/>
            <person name="de Haan M."/>
            <person name="Maarse A.C."/>
            <person name="Alcaraz J.-P."/>
            <person name="Cottet A."/>
            <person name="Casacuberta E."/>
            <person name="Monfort A."/>
            <person name="Argiriou A."/>
            <person name="Flores M."/>
            <person name="Liguori R."/>
            <person name="Vitale D."/>
            <person name="Mannhaupt G."/>
            <person name="Haase D."/>
            <person name="Schoof H."/>
            <person name="Rudd S."/>
            <person name="Zaccaria P."/>
            <person name="Mewes H.-W."/>
            <person name="Mayer K.F.X."/>
            <person name="Kaul S."/>
            <person name="Town C.D."/>
            <person name="Koo H.L."/>
            <person name="Tallon L.J."/>
            <person name="Jenkins J."/>
            <person name="Rooney T."/>
            <person name="Rizzo M."/>
            <person name="Walts A."/>
            <person name="Utterback T."/>
            <person name="Fujii C.Y."/>
            <person name="Shea T.P."/>
            <person name="Creasy T.H."/>
            <person name="Haas B."/>
            <person name="Maiti R."/>
            <person name="Wu D."/>
            <person name="Peterson J."/>
            <person name="Van Aken S."/>
            <person name="Pai G."/>
            <person name="Militscher J."/>
            <person name="Sellers P."/>
            <person name="Gill J.E."/>
            <person name="Feldblyum T.V."/>
            <person name="Preuss D."/>
            <person name="Lin X."/>
            <person name="Nierman W.C."/>
            <person name="Salzberg S.L."/>
            <person name="White O."/>
            <person name="Venter J.C."/>
            <person name="Fraser C.M."/>
            <person name="Kaneko T."/>
            <person name="Nakamura Y."/>
            <person name="Sato S."/>
            <person name="Kato T."/>
            <person name="Asamizu E."/>
            <person name="Sasamoto S."/>
            <person name="Kimura T."/>
            <person name="Idesawa K."/>
            <person name="Kawashima K."/>
            <person name="Kishida Y."/>
            <person name="Kiyokawa C."/>
            <person name="Kohara M."/>
            <person name="Matsumoto M."/>
            <person name="Matsuno A."/>
            <person name="Muraki A."/>
            <person name="Nakayama S."/>
            <person name="Nakazaki N."/>
            <person name="Shinpo S."/>
            <person name="Takeuchi C."/>
            <person name="Wada T."/>
            <person name="Watanabe A."/>
            <person name="Yamada M."/>
            <person name="Yasuda M."/>
            <person name="Tabata S."/>
        </authorList>
    </citation>
    <scope>NUCLEOTIDE SEQUENCE [LARGE SCALE GENOMIC DNA]</scope>
    <source>
        <strain>cv. Columbia</strain>
    </source>
</reference>
<reference key="2">
    <citation type="journal article" date="2017" name="Plant J.">
        <title>Araport11: a complete reannotation of the Arabidopsis thaliana reference genome.</title>
        <authorList>
            <person name="Cheng C.Y."/>
            <person name="Krishnakumar V."/>
            <person name="Chan A.P."/>
            <person name="Thibaud-Nissen F."/>
            <person name="Schobel S."/>
            <person name="Town C.D."/>
        </authorList>
    </citation>
    <scope>GENOME REANNOTATION</scope>
    <source>
        <strain>cv. Columbia</strain>
    </source>
</reference>
<reference key="3">
    <citation type="journal article" date="2009" name="DNA Res.">
        <title>Analysis of multiple occurrences of alternative splicing events in Arabidopsis thaliana using novel sequenced full-length cDNAs.</title>
        <authorList>
            <person name="Iida K."/>
            <person name="Fukami-Kobayashi K."/>
            <person name="Toyoda A."/>
            <person name="Sakaki Y."/>
            <person name="Kobayashi M."/>
            <person name="Seki M."/>
            <person name="Shinozaki K."/>
        </authorList>
    </citation>
    <scope>NUCLEOTIDE SEQUENCE [LARGE SCALE MRNA] (ISOFORM 2)</scope>
    <source>
        <strain>cv. Columbia</strain>
        <tissue>Root</tissue>
    </source>
</reference>
<reference key="4">
    <citation type="submission" date="2004-01" db="EMBL/GenBank/DDBJ databases">
        <title>Arabidopsis ORF clones.</title>
        <authorList>
            <person name="Cheuk R.F."/>
            <person name="Chen H."/>
            <person name="Kim C.J."/>
            <person name="Shinn P."/>
            <person name="Ecker J.R."/>
        </authorList>
    </citation>
    <scope>NUCLEOTIDE SEQUENCE [LARGE SCALE MRNA] (ISOFORM 1)</scope>
    <source>
        <strain>cv. Columbia</strain>
    </source>
</reference>
<reference key="5">
    <citation type="submission" date="2006-07" db="EMBL/GenBank/DDBJ databases">
        <title>Large-scale analysis of RIKEN Arabidopsis full-length (RAFL) cDNAs.</title>
        <authorList>
            <person name="Totoki Y."/>
            <person name="Seki M."/>
            <person name="Ishida J."/>
            <person name="Nakajima M."/>
            <person name="Enju A."/>
            <person name="Kamiya A."/>
            <person name="Narusaka M."/>
            <person name="Shin-i T."/>
            <person name="Nakagawa M."/>
            <person name="Sakamoto N."/>
            <person name="Oishi K."/>
            <person name="Kohara Y."/>
            <person name="Kobayashi M."/>
            <person name="Toyoda A."/>
            <person name="Sakaki Y."/>
            <person name="Sakurai T."/>
            <person name="Iida K."/>
            <person name="Akiyama K."/>
            <person name="Satou M."/>
            <person name="Toyoda T."/>
            <person name="Konagaya A."/>
            <person name="Carninci P."/>
            <person name="Kawai J."/>
            <person name="Hayashizaki Y."/>
            <person name="Shinozaki K."/>
        </authorList>
    </citation>
    <scope>NUCLEOTIDE SEQUENCE [LARGE SCALE MRNA] (ISOFORM 2)</scope>
    <source>
        <strain>cv. Columbia</strain>
    </source>
</reference>
<reference key="6">
    <citation type="journal article" date="2002" name="J. Biol. Chem.">
        <title>Transport of UDP-galactose in plants. Identification and functional characterization of AtUTr1, an Arabidopsis thaliana UDP-galactose/UDP-glucose transporter.</title>
        <authorList>
            <person name="Norambuena L."/>
            <person name="Marchant L."/>
            <person name="Berninsone P."/>
            <person name="Hirschberg C.B."/>
            <person name="Silva H."/>
            <person name="Orellana A."/>
        </authorList>
    </citation>
    <scope>GENE FAMILY</scope>
    <scope>NOMENCLATURE</scope>
</reference>
<reference key="7">
    <citation type="journal article" date="2005" name="Glycobiology">
        <title>Molecular cloning of two Arabidopsis UDP-galactose transporters by complementation of a deficient Chinese hamster ovary cell line.</title>
        <authorList>
            <person name="Bakker H."/>
            <person name="Routier F."/>
            <person name="Oelmann S."/>
            <person name="Jordi W."/>
            <person name="Lommen A."/>
            <person name="Gerardy-Schahn R."/>
            <person name="Bosch D."/>
        </authorList>
    </citation>
    <scope>GENE FAMILY</scope>
    <source>
        <strain>cv. Columbia</strain>
    </source>
</reference>
<reference key="8">
    <citation type="journal article" date="2014" name="Proc. Natl. Acad. Sci. U.S.A.">
        <title>The Golgi localized bifunctional UDP-rhamnose/UDP-galactose transporter family of Arabidopsis.</title>
        <authorList>
            <person name="Rautengarten C."/>
            <person name="Ebert B."/>
            <person name="Moreno I."/>
            <person name="Temple H."/>
            <person name="Herter T."/>
            <person name="Link B."/>
            <person name="Donas-Cofre D."/>
            <person name="Moreno A."/>
            <person name="Saez-Aguayo S."/>
            <person name="Blanco F."/>
            <person name="Mortimer J.C."/>
            <person name="Schultink A."/>
            <person name="Reiter W.D."/>
            <person name="Dupree P."/>
            <person name="Pauly M."/>
            <person name="Heazlewood J.L."/>
            <person name="Scheller H.V."/>
            <person name="Orellana A."/>
        </authorList>
    </citation>
    <scope>GENE FAMILY</scope>
</reference>
<protein>
    <recommendedName>
        <fullName evidence="4">UDP-galactose/UDP-glucose transporter 5</fullName>
        <shortName evidence="4">AtUTr5</shortName>
    </recommendedName>
</protein>
<feature type="chain" id="PRO_0000415964" description="UDP-galactose/UDP-glucose transporter 5">
    <location>
        <begin position="1"/>
        <end position="347"/>
    </location>
</feature>
<feature type="transmembrane region" description="Helical" evidence="2">
    <location>
        <begin position="17"/>
        <end position="37"/>
    </location>
</feature>
<feature type="transmembrane region" description="Helical" evidence="2">
    <location>
        <begin position="57"/>
        <end position="77"/>
    </location>
</feature>
<feature type="transmembrane region" description="Helical" evidence="2">
    <location>
        <begin position="116"/>
        <end position="136"/>
    </location>
</feature>
<feature type="transmembrane region" description="Helical" evidence="2">
    <location>
        <begin position="143"/>
        <end position="163"/>
    </location>
</feature>
<feature type="transmembrane region" description="Helical" evidence="2">
    <location>
        <begin position="177"/>
        <end position="197"/>
    </location>
</feature>
<feature type="transmembrane region" description="Helical" evidence="2">
    <location>
        <begin position="218"/>
        <end position="238"/>
    </location>
</feature>
<feature type="transmembrane region" description="Helical" evidence="2">
    <location>
        <begin position="247"/>
        <end position="267"/>
    </location>
</feature>
<feature type="transmembrane region" description="Helical" evidence="2">
    <location>
        <begin position="293"/>
        <end position="313"/>
    </location>
</feature>
<feature type="region of interest" description="Disordered" evidence="3">
    <location>
        <begin position="325"/>
        <end position="347"/>
    </location>
</feature>
<feature type="splice variant" id="VSP_042443" description="In isoform 2." evidence="5 6">
    <location>
        <begin position="186"/>
        <end position="347"/>
    </location>
</feature>
<feature type="sequence conflict" description="In Ref. 3; BAH57007." evidence="7" ref="3">
    <original>K</original>
    <variation>E</variation>
    <location>
        <position position="13"/>
    </location>
</feature>
<comment type="function">
    <text evidence="1">Sugar transporter involved in the transport of nucleotide-sugars from cytoplasm into the Golgi and/or the endoplasmic reticulum.</text>
</comment>
<comment type="subcellular location">
    <subcellularLocation>
        <location evidence="7">Membrane</location>
        <topology evidence="7">Multi-pass membrane protein</topology>
    </subcellularLocation>
</comment>
<comment type="alternative products">
    <event type="alternative splicing"/>
    <isoform>
        <id>Q6NM25-1</id>
        <name>1</name>
        <sequence type="displayed"/>
    </isoform>
    <isoform>
        <id>Q6NM25-2</id>
        <name>2</name>
        <sequence type="described" ref="VSP_042443"/>
    </isoform>
</comment>
<comment type="similarity">
    <text evidence="7">Belongs to the nucleotide-sugar transporter family. UDP-galactose:UMP antiporter (TC 2.A.7.11) subfamily.</text>
</comment>
<comment type="sequence caution" evidence="7">
    <conflict type="erroneous gene model prediction">
        <sequence resource="EMBL-CDS" id="CAB90945"/>
    </conflict>
</comment>
<accession>Q6NM25</accession>
<accession>C0Z2S8</accession>
<accession>Q0WTJ3</accession>
<accession>Q9LX77</accession>
<keyword id="KW-0025">Alternative splicing</keyword>
<keyword id="KW-0050">Antiport</keyword>
<keyword id="KW-0472">Membrane</keyword>
<keyword id="KW-1185">Reference proteome</keyword>
<keyword id="KW-0762">Sugar transport</keyword>
<keyword id="KW-0812">Transmembrane</keyword>
<keyword id="KW-1133">Transmembrane helix</keyword>
<keyword id="KW-0813">Transport</keyword>
<dbReference type="EMBL" id="AL355775">
    <property type="protein sequence ID" value="CAB90945.1"/>
    <property type="status" value="ALT_SEQ"/>
    <property type="molecule type" value="Genomic_DNA"/>
</dbReference>
<dbReference type="EMBL" id="CP002686">
    <property type="protein sequence ID" value="AEE78125.1"/>
    <property type="molecule type" value="Genomic_DNA"/>
</dbReference>
<dbReference type="EMBL" id="AK318892">
    <property type="protein sequence ID" value="BAH57007.1"/>
    <property type="molecule type" value="mRNA"/>
</dbReference>
<dbReference type="EMBL" id="BT011224">
    <property type="protein sequence ID" value="AAR92260.1"/>
    <property type="molecule type" value="mRNA"/>
</dbReference>
<dbReference type="EMBL" id="BT012152">
    <property type="protein sequence ID" value="AAS76247.1"/>
    <property type="molecule type" value="mRNA"/>
</dbReference>
<dbReference type="EMBL" id="AK227561">
    <property type="protein sequence ID" value="BAE99555.1"/>
    <property type="molecule type" value="mRNA"/>
</dbReference>
<dbReference type="PIR" id="T49259">
    <property type="entry name" value="T49259"/>
</dbReference>
<dbReference type="RefSeq" id="NP_190204.2">
    <molecule id="Q6NM25-1"/>
    <property type="nucleotide sequence ID" value="NM_114487.4"/>
</dbReference>
<dbReference type="SMR" id="Q6NM25"/>
<dbReference type="FunCoup" id="Q6NM25">
    <property type="interactions" value="2441"/>
</dbReference>
<dbReference type="STRING" id="3702.Q6NM25"/>
<dbReference type="TCDB" id="2.A.7.11.7">
    <property type="family name" value="the drug/metabolite transporter (dmt) superfamily"/>
</dbReference>
<dbReference type="PaxDb" id="3702-AT3G46180.1"/>
<dbReference type="ProteomicsDB" id="228572">
    <molecule id="Q6NM25-1"/>
</dbReference>
<dbReference type="EnsemblPlants" id="AT3G46180.1">
    <molecule id="Q6NM25-1"/>
    <property type="protein sequence ID" value="AT3G46180.1"/>
    <property type="gene ID" value="AT3G46180"/>
</dbReference>
<dbReference type="GeneID" id="823761"/>
<dbReference type="Gramene" id="AT3G46180.1">
    <molecule id="Q6NM25-1"/>
    <property type="protein sequence ID" value="AT3G46180.1"/>
    <property type="gene ID" value="AT3G46180"/>
</dbReference>
<dbReference type="KEGG" id="ath:AT3G46180"/>
<dbReference type="Araport" id="AT3G46180"/>
<dbReference type="TAIR" id="AT3G46180">
    <property type="gene designation" value="UTR5"/>
</dbReference>
<dbReference type="eggNOG" id="KOG1581">
    <property type="taxonomic scope" value="Eukaryota"/>
</dbReference>
<dbReference type="HOGENOM" id="CLU_036019_3_0_1"/>
<dbReference type="InParanoid" id="Q6NM25"/>
<dbReference type="OMA" id="IGLNWVN"/>
<dbReference type="OrthoDB" id="1601at2759"/>
<dbReference type="PhylomeDB" id="Q6NM25"/>
<dbReference type="PRO" id="PR:Q6NM25"/>
<dbReference type="Proteomes" id="UP000006548">
    <property type="component" value="Chromosome 3"/>
</dbReference>
<dbReference type="ExpressionAtlas" id="Q6NM25">
    <property type="expression patterns" value="baseline and differential"/>
</dbReference>
<dbReference type="GO" id="GO:0016020">
    <property type="term" value="C:membrane"/>
    <property type="evidence" value="ECO:0007669"/>
    <property type="project" value="UniProtKB-SubCell"/>
</dbReference>
<dbReference type="GO" id="GO:0015297">
    <property type="term" value="F:antiporter activity"/>
    <property type="evidence" value="ECO:0007669"/>
    <property type="project" value="UniProtKB-KW"/>
</dbReference>
<dbReference type="InterPro" id="IPR013657">
    <property type="entry name" value="SCL35B1-4/HUT1"/>
</dbReference>
<dbReference type="PANTHER" id="PTHR10778:SF13">
    <property type="entry name" value="ADENOSINE 3'-PHOSPHO 5'-PHOSPHOSULFATE TRANSPORTER 1"/>
    <property type="match status" value="1"/>
</dbReference>
<dbReference type="PANTHER" id="PTHR10778">
    <property type="entry name" value="SOLUTE CARRIER FAMILY 35 MEMBER B"/>
    <property type="match status" value="1"/>
</dbReference>
<dbReference type="Pfam" id="PF08449">
    <property type="entry name" value="UAA"/>
    <property type="match status" value="1"/>
</dbReference>
<dbReference type="SUPFAM" id="SSF103481">
    <property type="entry name" value="Multidrug resistance efflux transporter EmrE"/>
    <property type="match status" value="1"/>
</dbReference>
<gene>
    <name evidence="4" type="primary">UTR5</name>
    <name evidence="8" type="ordered locus">At3g46180</name>
    <name evidence="9" type="ORF">F12M12.150</name>
</gene>
<sequence>MAEPDSVNEAKEKKKKLWKAVFAISGIMLTLVIYGLLQEKIMRVPYGLKKEYFKHSLFLVFCNRLTTSAVSAAALLASKKVLDPVAPVYKYCLISVTNILTTTCQYEALKYVSFPVQTLAKCAKMIPVMVWGTLIMQKKYRGFDYLVAFLVTLGCSVFILFPAGDDISPYNKGRENTVWGVSLMVGYLGFDGFTSTFQDKLFKGYNMEIHNQIFYTTICSSILSFTGLILQGHLLPAVDFVSRHRDCLFDIALLSTVATASQFFISYTIRTFGALTFAAIMTTRQLASIMLSCIWFSHPLSWEQCIGSVIVFGSLYAKTFVKKKSEKPPAAQELPRDEEAQPLKGNP</sequence>
<organism>
    <name type="scientific">Arabidopsis thaliana</name>
    <name type="common">Mouse-ear cress</name>
    <dbReference type="NCBI Taxonomy" id="3702"/>
    <lineage>
        <taxon>Eukaryota</taxon>
        <taxon>Viridiplantae</taxon>
        <taxon>Streptophyta</taxon>
        <taxon>Embryophyta</taxon>
        <taxon>Tracheophyta</taxon>
        <taxon>Spermatophyta</taxon>
        <taxon>Magnoliopsida</taxon>
        <taxon>eudicotyledons</taxon>
        <taxon>Gunneridae</taxon>
        <taxon>Pentapetalae</taxon>
        <taxon>rosids</taxon>
        <taxon>malvids</taxon>
        <taxon>Brassicales</taxon>
        <taxon>Brassicaceae</taxon>
        <taxon>Camelineae</taxon>
        <taxon>Arabidopsis</taxon>
    </lineage>
</organism>
<proteinExistence type="evidence at transcript level"/>
<evidence type="ECO:0000250" key="1"/>
<evidence type="ECO:0000255" key="2"/>
<evidence type="ECO:0000256" key="3">
    <source>
        <dbReference type="SAM" id="MobiDB-lite"/>
    </source>
</evidence>
<evidence type="ECO:0000303" key="4">
    <source>
    </source>
</evidence>
<evidence type="ECO:0000303" key="5">
    <source>
    </source>
</evidence>
<evidence type="ECO:0000303" key="6">
    <source ref="5"/>
</evidence>
<evidence type="ECO:0000305" key="7"/>
<evidence type="ECO:0000312" key="8">
    <source>
        <dbReference type="Araport" id="AT3G46180"/>
    </source>
</evidence>
<evidence type="ECO:0000312" key="9">
    <source>
        <dbReference type="EMBL" id="CAB90945.1"/>
    </source>
</evidence>
<name>UTR5_ARATH</name>